<name>PYRH_MYCGE</name>
<gene>
    <name evidence="1" type="primary">pyrH</name>
    <name type="synonym">smbA</name>
    <name type="ordered locus">MG434</name>
</gene>
<feature type="chain" id="PRO_0000143859" description="Uridylate kinase">
    <location>
        <begin position="1"/>
        <end position="243"/>
    </location>
</feature>
<feature type="binding site" evidence="1">
    <location>
        <begin position="15"/>
        <end position="18"/>
    </location>
    <ligand>
        <name>ATP</name>
        <dbReference type="ChEBI" id="CHEBI:30616"/>
    </ligand>
</feature>
<feature type="binding site" evidence="1">
    <location>
        <position position="56"/>
    </location>
    <ligand>
        <name>UMP</name>
        <dbReference type="ChEBI" id="CHEBI:57865"/>
    </ligand>
</feature>
<feature type="binding site" evidence="1">
    <location>
        <position position="57"/>
    </location>
    <ligand>
        <name>ATP</name>
        <dbReference type="ChEBI" id="CHEBI:30616"/>
    </ligand>
</feature>
<feature type="binding site" evidence="1">
    <location>
        <position position="61"/>
    </location>
    <ligand>
        <name>ATP</name>
        <dbReference type="ChEBI" id="CHEBI:30616"/>
    </ligand>
</feature>
<feature type="binding site" evidence="1">
    <location>
        <begin position="138"/>
        <end position="145"/>
    </location>
    <ligand>
        <name>UMP</name>
        <dbReference type="ChEBI" id="CHEBI:57865"/>
    </ligand>
</feature>
<feature type="binding site" evidence="1">
    <location>
        <position position="166"/>
    </location>
    <ligand>
        <name>ATP</name>
        <dbReference type="ChEBI" id="CHEBI:30616"/>
    </ligand>
</feature>
<feature type="binding site" evidence="1">
    <location>
        <position position="172"/>
    </location>
    <ligand>
        <name>ATP</name>
        <dbReference type="ChEBI" id="CHEBI:30616"/>
    </ligand>
</feature>
<feature type="binding site" evidence="1">
    <location>
        <position position="175"/>
    </location>
    <ligand>
        <name>ATP</name>
        <dbReference type="ChEBI" id="CHEBI:30616"/>
    </ligand>
</feature>
<accession>P47672</accession>
<organism>
    <name type="scientific">Mycoplasma genitalium (strain ATCC 33530 / DSM 19775 / NCTC 10195 / G37)</name>
    <name type="common">Mycoplasmoides genitalium</name>
    <dbReference type="NCBI Taxonomy" id="243273"/>
    <lineage>
        <taxon>Bacteria</taxon>
        <taxon>Bacillati</taxon>
        <taxon>Mycoplasmatota</taxon>
        <taxon>Mycoplasmoidales</taxon>
        <taxon>Mycoplasmoidaceae</taxon>
        <taxon>Mycoplasmoides</taxon>
    </lineage>
</organism>
<proteinExistence type="inferred from homology"/>
<keyword id="KW-0067">ATP-binding</keyword>
<keyword id="KW-0963">Cytoplasm</keyword>
<keyword id="KW-0418">Kinase</keyword>
<keyword id="KW-0547">Nucleotide-binding</keyword>
<keyword id="KW-0665">Pyrimidine biosynthesis</keyword>
<keyword id="KW-1185">Reference proteome</keyword>
<keyword id="KW-0808">Transferase</keyword>
<sequence>MHKSNNKIRQRIIIKLSGAGLTKENSQPFSNDFFETIINQLKVLKESYQVGIVIGGGNIIRGNNCQEFNIAEYHGHQLGIIATVVNGYFLKAKLDAHNLKSALLSAISCPSLAVQILSQQTIDKAFEENDFVIFSGGTGNPYFSTDTALALRAVQTKAVAILIGKNGVDGVYTADPKKDKNATFLPTLNYDHAIKNDLKIMDITAFTMCKENNLKIIIFNINAENALLDALNKKGRFTIIENN</sequence>
<reference key="1">
    <citation type="journal article" date="1995" name="Science">
        <title>The minimal gene complement of Mycoplasma genitalium.</title>
        <authorList>
            <person name="Fraser C.M."/>
            <person name="Gocayne J.D."/>
            <person name="White O."/>
            <person name="Adams M.D."/>
            <person name="Clayton R.A."/>
            <person name="Fleischmann R.D."/>
            <person name="Bult C.J."/>
            <person name="Kerlavage A.R."/>
            <person name="Sutton G.G."/>
            <person name="Kelley J.M."/>
            <person name="Fritchman J.L."/>
            <person name="Weidman J.F."/>
            <person name="Small K.V."/>
            <person name="Sandusky M."/>
            <person name="Fuhrmann J.L."/>
            <person name="Nguyen D.T."/>
            <person name="Utterback T.R."/>
            <person name="Saudek D.M."/>
            <person name="Phillips C.A."/>
            <person name="Merrick J.M."/>
            <person name="Tomb J.-F."/>
            <person name="Dougherty B.A."/>
            <person name="Bott K.F."/>
            <person name="Hu P.-C."/>
            <person name="Lucier T.S."/>
            <person name="Peterson S.N."/>
            <person name="Smith H.O."/>
            <person name="Hutchison C.A. III"/>
            <person name="Venter J.C."/>
        </authorList>
    </citation>
    <scope>NUCLEOTIDE SEQUENCE [LARGE SCALE GENOMIC DNA]</scope>
    <source>
        <strain>ATCC 33530 / DSM 19775 / NCTC 10195 / G37</strain>
    </source>
</reference>
<evidence type="ECO:0000255" key="1">
    <source>
        <dbReference type="HAMAP-Rule" id="MF_01220"/>
    </source>
</evidence>
<comment type="function">
    <text evidence="1">Catalyzes the reversible phosphorylation of UMP to UDP.</text>
</comment>
<comment type="catalytic activity">
    <reaction evidence="1">
        <text>UMP + ATP = UDP + ADP</text>
        <dbReference type="Rhea" id="RHEA:24400"/>
        <dbReference type="ChEBI" id="CHEBI:30616"/>
        <dbReference type="ChEBI" id="CHEBI:57865"/>
        <dbReference type="ChEBI" id="CHEBI:58223"/>
        <dbReference type="ChEBI" id="CHEBI:456216"/>
        <dbReference type="EC" id="2.7.4.22"/>
    </reaction>
</comment>
<comment type="activity regulation">
    <text evidence="1">Inhibited by UTP.</text>
</comment>
<comment type="pathway">
    <text evidence="1">Pyrimidine metabolism; CTP biosynthesis via de novo pathway; UDP from UMP (UMPK route): step 1/1.</text>
</comment>
<comment type="subunit">
    <text evidence="1">Homohexamer.</text>
</comment>
<comment type="subcellular location">
    <subcellularLocation>
        <location evidence="1">Cytoplasm</location>
    </subcellularLocation>
</comment>
<comment type="similarity">
    <text evidence="1">Belongs to the UMP kinase family.</text>
</comment>
<dbReference type="EC" id="2.7.4.22" evidence="1"/>
<dbReference type="EMBL" id="L43967">
    <property type="protein sequence ID" value="AAC72455.1"/>
    <property type="molecule type" value="Genomic_DNA"/>
</dbReference>
<dbReference type="PIR" id="T09769">
    <property type="entry name" value="T09769"/>
</dbReference>
<dbReference type="RefSeq" id="WP_009885599.1">
    <property type="nucleotide sequence ID" value="NC_000908.2"/>
</dbReference>
<dbReference type="SMR" id="P47672"/>
<dbReference type="FunCoup" id="P47672">
    <property type="interactions" value="223"/>
</dbReference>
<dbReference type="STRING" id="243273.MG_434"/>
<dbReference type="GeneID" id="88282615"/>
<dbReference type="KEGG" id="mge:MG_434"/>
<dbReference type="eggNOG" id="COG0528">
    <property type="taxonomic scope" value="Bacteria"/>
</dbReference>
<dbReference type="HOGENOM" id="CLU_033861_0_1_14"/>
<dbReference type="InParanoid" id="P47672"/>
<dbReference type="OrthoDB" id="9807458at2"/>
<dbReference type="BioCyc" id="MGEN243273:G1GJ2-528-MONOMER"/>
<dbReference type="UniPathway" id="UPA00159">
    <property type="reaction ID" value="UER00275"/>
</dbReference>
<dbReference type="Proteomes" id="UP000000807">
    <property type="component" value="Chromosome"/>
</dbReference>
<dbReference type="GO" id="GO:0005737">
    <property type="term" value="C:cytoplasm"/>
    <property type="evidence" value="ECO:0007669"/>
    <property type="project" value="UniProtKB-SubCell"/>
</dbReference>
<dbReference type="GO" id="GO:0005524">
    <property type="term" value="F:ATP binding"/>
    <property type="evidence" value="ECO:0007669"/>
    <property type="project" value="UniProtKB-KW"/>
</dbReference>
<dbReference type="GO" id="GO:0033862">
    <property type="term" value="F:UMP kinase activity"/>
    <property type="evidence" value="ECO:0000318"/>
    <property type="project" value="GO_Central"/>
</dbReference>
<dbReference type="GO" id="GO:0044210">
    <property type="term" value="P:'de novo' CTP biosynthetic process"/>
    <property type="evidence" value="ECO:0007669"/>
    <property type="project" value="UniProtKB-UniRule"/>
</dbReference>
<dbReference type="GO" id="GO:0006225">
    <property type="term" value="P:UDP biosynthetic process"/>
    <property type="evidence" value="ECO:0000318"/>
    <property type="project" value="GO_Central"/>
</dbReference>
<dbReference type="FunFam" id="3.40.1160.10:FF:000001">
    <property type="entry name" value="Uridylate kinase"/>
    <property type="match status" value="1"/>
</dbReference>
<dbReference type="Gene3D" id="3.40.1160.10">
    <property type="entry name" value="Acetylglutamate kinase-like"/>
    <property type="match status" value="1"/>
</dbReference>
<dbReference type="HAMAP" id="MF_01220_B">
    <property type="entry name" value="PyrH_B"/>
    <property type="match status" value="1"/>
</dbReference>
<dbReference type="InterPro" id="IPR036393">
    <property type="entry name" value="AceGlu_kinase-like_sf"/>
</dbReference>
<dbReference type="InterPro" id="IPR001048">
    <property type="entry name" value="Asp/Glu/Uridylate_kinase"/>
</dbReference>
<dbReference type="InterPro" id="IPR011817">
    <property type="entry name" value="Uridylate_kinase"/>
</dbReference>
<dbReference type="InterPro" id="IPR015963">
    <property type="entry name" value="Uridylate_kinase_bac"/>
</dbReference>
<dbReference type="NCBIfam" id="TIGR02075">
    <property type="entry name" value="pyrH_bact"/>
    <property type="match status" value="1"/>
</dbReference>
<dbReference type="PANTHER" id="PTHR42833">
    <property type="entry name" value="URIDYLATE KINASE"/>
    <property type="match status" value="1"/>
</dbReference>
<dbReference type="PANTHER" id="PTHR42833:SF4">
    <property type="entry name" value="URIDYLATE KINASE PUMPKIN, CHLOROPLASTIC"/>
    <property type="match status" value="1"/>
</dbReference>
<dbReference type="Pfam" id="PF00696">
    <property type="entry name" value="AA_kinase"/>
    <property type="match status" value="1"/>
</dbReference>
<dbReference type="PIRSF" id="PIRSF005650">
    <property type="entry name" value="Uridylate_kin"/>
    <property type="match status" value="1"/>
</dbReference>
<dbReference type="SUPFAM" id="SSF53633">
    <property type="entry name" value="Carbamate kinase-like"/>
    <property type="match status" value="1"/>
</dbReference>
<protein>
    <recommendedName>
        <fullName evidence="1">Uridylate kinase</fullName>
        <shortName evidence="1">UK</shortName>
        <ecNumber evidence="1">2.7.4.22</ecNumber>
    </recommendedName>
    <alternativeName>
        <fullName evidence="1">Uridine monophosphate kinase</fullName>
        <shortName evidence="1">UMP kinase</shortName>
        <shortName evidence="1">UMPK</shortName>
    </alternativeName>
</protein>